<keyword id="KW-1185">Reference proteome</keyword>
<protein>
    <recommendedName>
        <fullName>Uncharacterized protein 154</fullName>
    </recommendedName>
</protein>
<gene>
    <name type="ORF">154</name>
</gene>
<organism>
    <name type="scientific">Sulfolobus islandicus rod-shaped virus 1</name>
    <name type="common">SIRV-1</name>
    <name type="synonym">Sulfolobus virus SIRV-1</name>
    <dbReference type="NCBI Taxonomy" id="157898"/>
    <lineage>
        <taxon>Viruses</taxon>
        <taxon>Adnaviria</taxon>
        <taxon>Zilligvirae</taxon>
        <taxon>Taleaviricota</taxon>
        <taxon>Tokiviricetes</taxon>
        <taxon>Ligamenvirales</taxon>
        <taxon>Rudiviridae</taxon>
        <taxon>Icerudivirus</taxon>
        <taxon>Icerudivirus SIRV1</taxon>
    </lineage>
</organism>
<sequence length="154" mass="18130">MNQKYEVEEIKNKELVKLARMLIDYYHIQGMVKGGGAGRNSRYFMYLEKEDDKKYIVAVAWLHDNTPFRFIAQQYNIPNDRSYFIRRVTKTAPGDHLVNFLNDLAEKLKKDGFEVLWTLGFPDHSNALYKKAGFKLVGQTSRTKHEVYVKYLNK</sequence>
<accession>Q8QL29</accession>
<accession>Q5TJ93</accession>
<organismHost>
    <name type="scientific">Saccharolobus islandicus</name>
    <name type="common">Sulfolobus islandicus</name>
    <dbReference type="NCBI Taxonomy" id="43080"/>
</organismHost>
<reference key="1">
    <citation type="journal article" date="2001" name="Virology">
        <title>Sequences and replication of genomes of the archaeal rudiviruses SIRV1 and SIRV2: relationships to the archaeal lipothrixvirus SIFV and some eukaryal viruses.</title>
        <authorList>
            <person name="Peng X."/>
            <person name="Blum H."/>
            <person name="She Q."/>
            <person name="Mallok S."/>
            <person name="Bruegger K."/>
            <person name="Garrett R.A."/>
            <person name="Zillig W."/>
            <person name="Prangishvili D."/>
        </authorList>
    </citation>
    <scope>NUCLEOTIDE SEQUENCE [LARGE SCALE GENOMIC DNA]</scope>
    <source>
        <strain>Isolate variant VIII</strain>
    </source>
</reference>
<reference key="2">
    <citation type="journal article" date="2004" name="Mol. Microbiol.">
        <title>Multiple variants of the archaeal DNA rudivirus SIRV1 in a single host and a novel mechanism of genomic variation.</title>
        <authorList>
            <person name="Peng X."/>
            <person name="Kessler A."/>
            <person name="Phan H."/>
            <person name="Garrett R.A."/>
            <person name="Prangishvili D."/>
        </authorList>
    </citation>
    <scope>NUCLEOTIDE SEQUENCE [LARGE SCALE GENOMIC DNA]</scope>
    <source>
        <strain>Isolate variant XX</strain>
    </source>
</reference>
<feature type="chain" id="PRO_0000342309" description="Uncharacterized protein 154">
    <location>
        <begin position="1"/>
        <end position="154"/>
    </location>
</feature>
<dbReference type="EMBL" id="AJ414696">
    <property type="protein sequence ID" value="CAC93981.1"/>
    <property type="molecule type" value="Genomic_DNA"/>
</dbReference>
<dbReference type="EMBL" id="AJ748296">
    <property type="protein sequence ID" value="CAG38845.1"/>
    <property type="molecule type" value="Genomic_DNA"/>
</dbReference>
<dbReference type="RefSeq" id="NP_666614.1">
    <property type="nucleotide sequence ID" value="NC_004087.1"/>
</dbReference>
<dbReference type="SMR" id="Q8QL29"/>
<dbReference type="KEGG" id="vg:951394"/>
<dbReference type="OrthoDB" id="11265at10239"/>
<dbReference type="Proteomes" id="UP000002270">
    <property type="component" value="Genome"/>
</dbReference>
<dbReference type="Proteomes" id="UP000223181">
    <property type="component" value="Segment"/>
</dbReference>
<name>Y154_SIRV1</name>
<proteinExistence type="predicted"/>